<sequence length="307" mass="32431">MTDLRGTLTENRPLADLTWLRVGGPADLFFQPADADDLAAFLRADLARPVFVMGVGSNLIVRDGGLRAAVIRLGRGFNGIRIDGTRVRAGAAALDAHVARKAAAAGVDLTFLRTIPGTIGGAVAMNAGCYGTYMADVFVEATALTRAGEAITLTREDLNFRYRQSDLPPGTVITEVVMEGPPGAPEALEARMADQLAKREATQPTKDRTAGSTFRNPAGFSSTGRADDTHEAKAWAVIDAAGMRGAMRGAAQMSPKHPNFLVNTGGATAAELESLGEEVRKKVFQATGHSLHWEVIRIGQPGRTPPA</sequence>
<accession>A8LS61</accession>
<protein>
    <recommendedName>
        <fullName evidence="1">UDP-N-acetylenolpyruvoylglucosamine reductase</fullName>
        <ecNumber evidence="1">1.3.1.98</ecNumber>
    </recommendedName>
    <alternativeName>
        <fullName evidence="1">UDP-N-acetylmuramate dehydrogenase</fullName>
    </alternativeName>
</protein>
<evidence type="ECO:0000255" key="1">
    <source>
        <dbReference type="HAMAP-Rule" id="MF_00037"/>
    </source>
</evidence>
<evidence type="ECO:0000256" key="2">
    <source>
        <dbReference type="SAM" id="MobiDB-lite"/>
    </source>
</evidence>
<organism>
    <name type="scientific">Dinoroseobacter shibae (strain DSM 16493 / NCIMB 14021 / DFL 12)</name>
    <dbReference type="NCBI Taxonomy" id="398580"/>
    <lineage>
        <taxon>Bacteria</taxon>
        <taxon>Pseudomonadati</taxon>
        <taxon>Pseudomonadota</taxon>
        <taxon>Alphaproteobacteria</taxon>
        <taxon>Rhodobacterales</taxon>
        <taxon>Roseobacteraceae</taxon>
        <taxon>Dinoroseobacter</taxon>
    </lineage>
</organism>
<proteinExistence type="inferred from homology"/>
<feature type="chain" id="PRO_0000332457" description="UDP-N-acetylenolpyruvoylglucosamine reductase">
    <location>
        <begin position="1"/>
        <end position="307"/>
    </location>
</feature>
<feature type="domain" description="FAD-binding PCMH-type" evidence="1">
    <location>
        <begin position="21"/>
        <end position="183"/>
    </location>
</feature>
<feature type="region of interest" description="Disordered" evidence="2">
    <location>
        <begin position="200"/>
        <end position="227"/>
    </location>
</feature>
<feature type="compositionally biased region" description="Basic and acidic residues" evidence="2">
    <location>
        <begin position="200"/>
        <end position="209"/>
    </location>
</feature>
<feature type="compositionally biased region" description="Polar residues" evidence="2">
    <location>
        <begin position="210"/>
        <end position="224"/>
    </location>
</feature>
<feature type="active site" evidence="1">
    <location>
        <position position="163"/>
    </location>
</feature>
<feature type="active site" description="Proton donor" evidence="1">
    <location>
        <position position="212"/>
    </location>
</feature>
<feature type="active site" evidence="1">
    <location>
        <position position="294"/>
    </location>
</feature>
<comment type="function">
    <text evidence="1">Cell wall formation.</text>
</comment>
<comment type="catalytic activity">
    <reaction evidence="1">
        <text>UDP-N-acetyl-alpha-D-muramate + NADP(+) = UDP-N-acetyl-3-O-(1-carboxyvinyl)-alpha-D-glucosamine + NADPH + H(+)</text>
        <dbReference type="Rhea" id="RHEA:12248"/>
        <dbReference type="ChEBI" id="CHEBI:15378"/>
        <dbReference type="ChEBI" id="CHEBI:57783"/>
        <dbReference type="ChEBI" id="CHEBI:58349"/>
        <dbReference type="ChEBI" id="CHEBI:68483"/>
        <dbReference type="ChEBI" id="CHEBI:70757"/>
        <dbReference type="EC" id="1.3.1.98"/>
    </reaction>
</comment>
<comment type="cofactor">
    <cofactor evidence="1">
        <name>FAD</name>
        <dbReference type="ChEBI" id="CHEBI:57692"/>
    </cofactor>
</comment>
<comment type="pathway">
    <text evidence="1">Cell wall biogenesis; peptidoglycan biosynthesis.</text>
</comment>
<comment type="subcellular location">
    <subcellularLocation>
        <location evidence="1">Cytoplasm</location>
    </subcellularLocation>
</comment>
<comment type="similarity">
    <text evidence="1">Belongs to the MurB family.</text>
</comment>
<reference key="1">
    <citation type="journal article" date="2010" name="ISME J.">
        <title>The complete genome sequence of the algal symbiont Dinoroseobacter shibae: a hitchhiker's guide to life in the sea.</title>
        <authorList>
            <person name="Wagner-Dobler I."/>
            <person name="Ballhausen B."/>
            <person name="Berger M."/>
            <person name="Brinkhoff T."/>
            <person name="Buchholz I."/>
            <person name="Bunk B."/>
            <person name="Cypionka H."/>
            <person name="Daniel R."/>
            <person name="Drepper T."/>
            <person name="Gerdts G."/>
            <person name="Hahnke S."/>
            <person name="Han C."/>
            <person name="Jahn D."/>
            <person name="Kalhoefer D."/>
            <person name="Kiss H."/>
            <person name="Klenk H.P."/>
            <person name="Kyrpides N."/>
            <person name="Liebl W."/>
            <person name="Liesegang H."/>
            <person name="Meincke L."/>
            <person name="Pati A."/>
            <person name="Petersen J."/>
            <person name="Piekarski T."/>
            <person name="Pommerenke C."/>
            <person name="Pradella S."/>
            <person name="Pukall R."/>
            <person name="Rabus R."/>
            <person name="Stackebrandt E."/>
            <person name="Thole S."/>
            <person name="Thompson L."/>
            <person name="Tielen P."/>
            <person name="Tomasch J."/>
            <person name="von Jan M."/>
            <person name="Wanphrut N."/>
            <person name="Wichels A."/>
            <person name="Zech H."/>
            <person name="Simon M."/>
        </authorList>
    </citation>
    <scope>NUCLEOTIDE SEQUENCE [LARGE SCALE GENOMIC DNA]</scope>
    <source>
        <strain>DSM 16493 / NCIMB 14021 / DFL 12</strain>
    </source>
</reference>
<gene>
    <name evidence="1" type="primary">murB</name>
    <name type="ordered locus">Dshi_2420</name>
</gene>
<keyword id="KW-0131">Cell cycle</keyword>
<keyword id="KW-0132">Cell division</keyword>
<keyword id="KW-0133">Cell shape</keyword>
<keyword id="KW-0961">Cell wall biogenesis/degradation</keyword>
<keyword id="KW-0963">Cytoplasm</keyword>
<keyword id="KW-0274">FAD</keyword>
<keyword id="KW-0285">Flavoprotein</keyword>
<keyword id="KW-0521">NADP</keyword>
<keyword id="KW-0560">Oxidoreductase</keyword>
<keyword id="KW-0573">Peptidoglycan synthesis</keyword>
<keyword id="KW-1185">Reference proteome</keyword>
<name>MURB_DINSH</name>
<dbReference type="EC" id="1.3.1.98" evidence="1"/>
<dbReference type="EMBL" id="CP000830">
    <property type="protein sequence ID" value="ABV94154.1"/>
    <property type="molecule type" value="Genomic_DNA"/>
</dbReference>
<dbReference type="RefSeq" id="WP_012179085.1">
    <property type="nucleotide sequence ID" value="NC_009952.1"/>
</dbReference>
<dbReference type="SMR" id="A8LS61"/>
<dbReference type="STRING" id="398580.Dshi_2420"/>
<dbReference type="KEGG" id="dsh:Dshi_2420"/>
<dbReference type="eggNOG" id="COG0812">
    <property type="taxonomic scope" value="Bacteria"/>
</dbReference>
<dbReference type="HOGENOM" id="CLU_035304_1_0_5"/>
<dbReference type="OrthoDB" id="9804753at2"/>
<dbReference type="UniPathway" id="UPA00219"/>
<dbReference type="Proteomes" id="UP000006833">
    <property type="component" value="Chromosome"/>
</dbReference>
<dbReference type="GO" id="GO:0005829">
    <property type="term" value="C:cytosol"/>
    <property type="evidence" value="ECO:0007669"/>
    <property type="project" value="TreeGrafter"/>
</dbReference>
<dbReference type="GO" id="GO:0071949">
    <property type="term" value="F:FAD binding"/>
    <property type="evidence" value="ECO:0007669"/>
    <property type="project" value="InterPro"/>
</dbReference>
<dbReference type="GO" id="GO:0008762">
    <property type="term" value="F:UDP-N-acetylmuramate dehydrogenase activity"/>
    <property type="evidence" value="ECO:0007669"/>
    <property type="project" value="UniProtKB-UniRule"/>
</dbReference>
<dbReference type="GO" id="GO:0051301">
    <property type="term" value="P:cell division"/>
    <property type="evidence" value="ECO:0007669"/>
    <property type="project" value="UniProtKB-KW"/>
</dbReference>
<dbReference type="GO" id="GO:0071555">
    <property type="term" value="P:cell wall organization"/>
    <property type="evidence" value="ECO:0007669"/>
    <property type="project" value="UniProtKB-KW"/>
</dbReference>
<dbReference type="GO" id="GO:0009252">
    <property type="term" value="P:peptidoglycan biosynthetic process"/>
    <property type="evidence" value="ECO:0007669"/>
    <property type="project" value="UniProtKB-UniRule"/>
</dbReference>
<dbReference type="GO" id="GO:0008360">
    <property type="term" value="P:regulation of cell shape"/>
    <property type="evidence" value="ECO:0007669"/>
    <property type="project" value="UniProtKB-KW"/>
</dbReference>
<dbReference type="Gene3D" id="3.30.465.10">
    <property type="match status" value="1"/>
</dbReference>
<dbReference type="Gene3D" id="3.90.78.10">
    <property type="entry name" value="UDP-N-acetylenolpyruvoylglucosamine reductase, C-terminal domain"/>
    <property type="match status" value="1"/>
</dbReference>
<dbReference type="Gene3D" id="3.30.43.10">
    <property type="entry name" value="Uridine Diphospho-n-acetylenolpyruvylglucosamine Reductase, domain 2"/>
    <property type="match status" value="1"/>
</dbReference>
<dbReference type="HAMAP" id="MF_00037">
    <property type="entry name" value="MurB"/>
    <property type="match status" value="1"/>
</dbReference>
<dbReference type="InterPro" id="IPR016166">
    <property type="entry name" value="FAD-bd_PCMH"/>
</dbReference>
<dbReference type="InterPro" id="IPR036318">
    <property type="entry name" value="FAD-bd_PCMH-like_sf"/>
</dbReference>
<dbReference type="InterPro" id="IPR016167">
    <property type="entry name" value="FAD-bd_PCMH_sub1"/>
</dbReference>
<dbReference type="InterPro" id="IPR016169">
    <property type="entry name" value="FAD-bd_PCMH_sub2"/>
</dbReference>
<dbReference type="InterPro" id="IPR003170">
    <property type="entry name" value="MurB"/>
</dbReference>
<dbReference type="InterPro" id="IPR011601">
    <property type="entry name" value="MurB_C"/>
</dbReference>
<dbReference type="InterPro" id="IPR036635">
    <property type="entry name" value="MurB_C_sf"/>
</dbReference>
<dbReference type="InterPro" id="IPR006094">
    <property type="entry name" value="Oxid_FAD_bind_N"/>
</dbReference>
<dbReference type="NCBIfam" id="TIGR00179">
    <property type="entry name" value="murB"/>
    <property type="match status" value="1"/>
</dbReference>
<dbReference type="NCBIfam" id="NF010480">
    <property type="entry name" value="PRK13905.1"/>
    <property type="match status" value="1"/>
</dbReference>
<dbReference type="PANTHER" id="PTHR21071">
    <property type="entry name" value="UDP-N-ACETYLENOLPYRUVOYLGLUCOSAMINE REDUCTASE"/>
    <property type="match status" value="1"/>
</dbReference>
<dbReference type="PANTHER" id="PTHR21071:SF4">
    <property type="entry name" value="UDP-N-ACETYLENOLPYRUVOYLGLUCOSAMINE REDUCTASE"/>
    <property type="match status" value="1"/>
</dbReference>
<dbReference type="Pfam" id="PF01565">
    <property type="entry name" value="FAD_binding_4"/>
    <property type="match status" value="1"/>
</dbReference>
<dbReference type="Pfam" id="PF02873">
    <property type="entry name" value="MurB_C"/>
    <property type="match status" value="1"/>
</dbReference>
<dbReference type="SUPFAM" id="SSF56176">
    <property type="entry name" value="FAD-binding/transporter-associated domain-like"/>
    <property type="match status" value="1"/>
</dbReference>
<dbReference type="SUPFAM" id="SSF56194">
    <property type="entry name" value="Uridine diphospho-N-Acetylenolpyruvylglucosamine reductase, MurB, C-terminal domain"/>
    <property type="match status" value="1"/>
</dbReference>
<dbReference type="PROSITE" id="PS51387">
    <property type="entry name" value="FAD_PCMH"/>
    <property type="match status" value="1"/>
</dbReference>